<feature type="chain" id="PRO_0000314081" description="B-cell CLL/lymphoma 9-like protein">
    <location>
        <begin position="1"/>
        <end position="1530"/>
    </location>
</feature>
<feature type="region of interest" description="Disordered" evidence="2">
    <location>
        <begin position="1"/>
        <end position="101"/>
    </location>
</feature>
<feature type="region of interest" description="Disordered" evidence="2">
    <location>
        <begin position="155"/>
        <end position="187"/>
    </location>
</feature>
<feature type="region of interest" description="Disordered" evidence="2">
    <location>
        <begin position="246"/>
        <end position="353"/>
    </location>
</feature>
<feature type="region of interest" description="Disordered" evidence="2">
    <location>
        <begin position="398"/>
        <end position="439"/>
    </location>
</feature>
<feature type="region of interest" description="Disordered" evidence="2">
    <location>
        <begin position="473"/>
        <end position="503"/>
    </location>
</feature>
<feature type="region of interest" description="Disordered" evidence="2">
    <location>
        <begin position="821"/>
        <end position="1076"/>
    </location>
</feature>
<feature type="region of interest" description="Disordered" evidence="2">
    <location>
        <begin position="1250"/>
        <end position="1279"/>
    </location>
</feature>
<feature type="region of interest" description="Disordered" evidence="2">
    <location>
        <begin position="1310"/>
        <end position="1331"/>
    </location>
</feature>
<feature type="compositionally biased region" description="Polar residues" evidence="2">
    <location>
        <begin position="8"/>
        <end position="18"/>
    </location>
</feature>
<feature type="compositionally biased region" description="Low complexity" evidence="2">
    <location>
        <begin position="19"/>
        <end position="34"/>
    </location>
</feature>
<feature type="compositionally biased region" description="Basic and acidic residues" evidence="2">
    <location>
        <begin position="81"/>
        <end position="93"/>
    </location>
</feature>
<feature type="compositionally biased region" description="Low complexity" evidence="2">
    <location>
        <begin position="156"/>
        <end position="165"/>
    </location>
</feature>
<feature type="compositionally biased region" description="Gly residues" evidence="2">
    <location>
        <begin position="170"/>
        <end position="180"/>
    </location>
</feature>
<feature type="compositionally biased region" description="Polar residues" evidence="2">
    <location>
        <begin position="247"/>
        <end position="264"/>
    </location>
</feature>
<feature type="compositionally biased region" description="Polar residues" evidence="2">
    <location>
        <begin position="278"/>
        <end position="287"/>
    </location>
</feature>
<feature type="compositionally biased region" description="Low complexity" evidence="2">
    <location>
        <begin position="409"/>
        <end position="426"/>
    </location>
</feature>
<feature type="compositionally biased region" description="Low complexity" evidence="2">
    <location>
        <begin position="485"/>
        <end position="503"/>
    </location>
</feature>
<feature type="compositionally biased region" description="Polar residues" evidence="2">
    <location>
        <begin position="875"/>
        <end position="891"/>
    </location>
</feature>
<feature type="compositionally biased region" description="Polar residues" evidence="2">
    <location>
        <begin position="920"/>
        <end position="930"/>
    </location>
</feature>
<feature type="compositionally biased region" description="Polar residues" evidence="2">
    <location>
        <begin position="944"/>
        <end position="953"/>
    </location>
</feature>
<feature type="compositionally biased region" description="Low complexity" evidence="2">
    <location>
        <begin position="960"/>
        <end position="971"/>
    </location>
</feature>
<feature type="compositionally biased region" description="Low complexity" evidence="2">
    <location>
        <begin position="979"/>
        <end position="994"/>
    </location>
</feature>
<feature type="compositionally biased region" description="Low complexity" evidence="2">
    <location>
        <begin position="1031"/>
        <end position="1060"/>
    </location>
</feature>
<feature type="compositionally biased region" description="Pro residues" evidence="2">
    <location>
        <begin position="1258"/>
        <end position="1268"/>
    </location>
</feature>
<comment type="function">
    <text evidence="1 3">Transcriptional regulator that may act as an activator (By similarity). Plays a role for mesoderm patterning in early embryogenesis.</text>
</comment>
<comment type="subcellular location">
    <subcellularLocation>
        <location evidence="1">Nucleus</location>
    </subcellularLocation>
</comment>
<comment type="developmental stage">
    <text evidence="3">Highly expressed during gastrulation.</text>
</comment>
<comment type="disruption phenotype">
    <text evidence="3">Severe defects of trunk and tail development.</text>
</comment>
<comment type="similarity">
    <text evidence="4">Belongs to the BCL9 family.</text>
</comment>
<reference key="1">
    <citation type="journal article" date="2004" name="Genes Dev.">
        <title>Essential role of BCL9-2 in the switch between beta-catenin's adhesive and transcriptional functions.</title>
        <authorList>
            <person name="Brembeck F.H."/>
            <person name="Schwarz-Romond T."/>
            <person name="Bakkers J."/>
            <person name="Wilhelm S."/>
            <person name="Hammerschmidt M."/>
            <person name="Birchmeier W."/>
        </authorList>
    </citation>
    <scope>NUCLEOTIDE SEQUENCE [MRNA]</scope>
    <scope>FUNCTION</scope>
    <scope>DEVELOPMENTAL STAGE</scope>
    <scope>DISRUPTION PHENOTYPE</scope>
</reference>
<sequence>MHSENKLSNHGKQVTSGAQSQLPNVNQAQQQAPAGIQGSKGSVSGNHGVKANQISPGNPGLKSLNQTGGGGGMMKTKAKRERSVSIDTGDQRESLTPVLEPDAKVEGVMRSKRRCVLERKQPYSGDEWCSGAETEEEDEKPLSATHREHVMCPSQGHSGSSTTGHVSDPGGPGLGSGHGPGIRTDLHSRPPQQVVYVFTTSLANSAAEAVMHGHTDSILLYHQQNVPRTKLDQSTGVGKVSNLAEHISSSHSPPIGTPKSQSGTPRPASVGGVGHLPGTSTPSSTGHPDSEPAQTHRGGGTSSNNGRSAVHTLGLGNSGPQSVGVSGTEGVDRPGAIPHHGAGVSPSTSPSVLSALRQSELGQRVGPGNTDGLSKEQLEHRERSLQTLRDIERLLLRSGTGVAQEDPRGPNGNPNGTNVNNNNSNDGGRGLEDGEIGGGIPGNCHINNAGMPGMPPVGGMKKYEEPLQSIISQTQNLGGPGLDDSLMGPHHGMPPHSHHLSSPSGLDMGPLLGPEGVTPEQLAWRKLQEEYYQEKRRQHDMNPHQHPQHFRIMPEMGMPGGPPMLMRGPPPPYHSKPGDQQWGPGPMVGGGMGGNARMMDMNQEGPRGPRFLGQMRGPSGGGGYPESPGGVLGVEGLGPQRPPRPGMGWLEEIPPNMGGGGPFHGCCPPGGPGGPPQHFQGDLDRPMTREEIYRRIHRLDLQQMSRQQQQAGLGGPRMMDNPGGPGFPNPGMAGGPPSRGDPMDFPVSRTIMGSPIGGVGGDGGPTMRDIVDSPLGGNLNMNMGMNINQQQQLLAQKLRGGPGVLGEMLNAEDISRIRASQNGRGGANKAMIPGPEGPLQFPNQSSFPGGQVDGPYLQQPGPDMYGPDQPGPPHLSSTSRLSHIPMNTGSRVTDLGARHPPDLPISVNPMGSPAIPPSHQLKSPSLSQEPSPLMPSPSAAGLKSPSQLPQSGPTHPPLPAASGAGTPSSTSIKSPQVMGPSLGLRSPSGSPGHLKSPSMPVASPGWTASPKAAMPSPGGPPSVKVTGNGGSSSTDTGMSLPPRSSNSTPISQPSNSINPSMPFTSSPDAPPSQNPLSLIMSQMSKYAMPSSTPLYHDAIKTIATSDDEMLPDRPLQPGTNMSVGGMGNHQSAQMLLSSQGAMGPHSGPQSPMGMVLQGGPPLSHDHPGPMLPSPNPMGIPGMPSEIMGGGGGPPDGIGPCNVSPMHTQNQMGGFPRIQGPLHSPIGGMGQQFPPRPDDVLPPQQMHLLSKGMSHQRPPHQPDSFPPMPMGDGPDLSEVIRPTHRGIPEFDLSRIIPADKPSSTLQYFPKSETMSQPQQNPHQGQPPPQVSSAQLLKQLSSSGPPHSNIPSSNPHIANLQNMMAEQQLPLHPSHCGMRPGMGMPQIGSRGMGSGGGMGPMCHPGHMMGRTGMSPQQQLQQQHHHQQQQAMMANNLLQHPSHPPRGMLSPQQHPHNLIAQQNLMMMQAKQRGMALPGEHFGQQGALMSPQGPMMGPPHSQTGMMGPQSLRQRSMSLDSPLGYGPGSMANMPF</sequence>
<name>BCL9L_DANRE</name>
<protein>
    <recommendedName>
        <fullName>B-cell CLL/lymphoma 9-like protein</fullName>
        <shortName>B-cell lymphoma 9-like protein</shortName>
        <shortName>BCL9-like protein</shortName>
    </recommendedName>
    <alternativeName>
        <fullName>Protein BCL9-2</fullName>
    </alternativeName>
</protein>
<keyword id="KW-0010">Activator</keyword>
<keyword id="KW-0217">Developmental protein</keyword>
<keyword id="KW-0539">Nucleus</keyword>
<keyword id="KW-1185">Reference proteome</keyword>
<keyword id="KW-0804">Transcription</keyword>
<keyword id="KW-0805">Transcription regulation</keyword>
<dbReference type="EMBL" id="AY296057">
    <property type="protein sequence ID" value="AAQ62695.1"/>
    <property type="molecule type" value="mRNA"/>
</dbReference>
<dbReference type="RefSeq" id="NP_001005575.1">
    <property type="nucleotide sequence ID" value="NM_001005575.1"/>
</dbReference>
<dbReference type="SMR" id="Q67FY3"/>
<dbReference type="FunCoup" id="Q67FY3">
    <property type="interactions" value="1712"/>
</dbReference>
<dbReference type="STRING" id="7955.ENSDARP00000123831"/>
<dbReference type="PaxDb" id="7955-ENSDARP00000123831"/>
<dbReference type="GeneID" id="449532"/>
<dbReference type="KEGG" id="dre:449532"/>
<dbReference type="AGR" id="ZFIN:ZDB-GENE-040927-29"/>
<dbReference type="CTD" id="283149"/>
<dbReference type="ZFIN" id="ZDB-GENE-040927-29">
    <property type="gene designation" value="bcl9l"/>
</dbReference>
<dbReference type="eggNOG" id="ENOG502QR2B">
    <property type="taxonomic scope" value="Eukaryota"/>
</dbReference>
<dbReference type="InParanoid" id="Q67FY3"/>
<dbReference type="OrthoDB" id="7668649at2759"/>
<dbReference type="Reactome" id="R-DRE-201722">
    <property type="pathway name" value="Formation of the beta-catenin:TCF transactivating complex"/>
</dbReference>
<dbReference type="PRO" id="PR:Q67FY3"/>
<dbReference type="Proteomes" id="UP000000437">
    <property type="component" value="Chromosome 18"/>
</dbReference>
<dbReference type="GO" id="GO:1990907">
    <property type="term" value="C:beta-catenin-TCF complex"/>
    <property type="evidence" value="ECO:0000318"/>
    <property type="project" value="GO_Central"/>
</dbReference>
<dbReference type="GO" id="GO:0008013">
    <property type="term" value="F:beta-catenin binding"/>
    <property type="evidence" value="ECO:0000318"/>
    <property type="project" value="GO_Central"/>
</dbReference>
<dbReference type="GO" id="GO:0003713">
    <property type="term" value="F:transcription coactivator activity"/>
    <property type="evidence" value="ECO:0007669"/>
    <property type="project" value="InterPro"/>
</dbReference>
<dbReference type="GO" id="GO:0060070">
    <property type="term" value="P:canonical Wnt signaling pathway"/>
    <property type="evidence" value="ECO:0000318"/>
    <property type="project" value="GO_Central"/>
</dbReference>
<dbReference type="GO" id="GO:0048368">
    <property type="term" value="P:lateral mesoderm development"/>
    <property type="evidence" value="ECO:0000315"/>
    <property type="project" value="ZFIN"/>
</dbReference>
<dbReference type="GO" id="GO:0030512">
    <property type="term" value="P:negative regulation of transforming growth factor beta receptor signaling pathway"/>
    <property type="evidence" value="ECO:0000318"/>
    <property type="project" value="GO_Central"/>
</dbReference>
<dbReference type="GO" id="GO:0045944">
    <property type="term" value="P:positive regulation of transcription by RNA polymerase II"/>
    <property type="evidence" value="ECO:0000318"/>
    <property type="project" value="GO_Central"/>
</dbReference>
<dbReference type="GO" id="GO:0036342">
    <property type="term" value="P:post-anal tail morphogenesis"/>
    <property type="evidence" value="ECO:0000315"/>
    <property type="project" value="ZFIN"/>
</dbReference>
<dbReference type="Gene3D" id="3.30.40.10">
    <property type="entry name" value="Zinc/RING finger domain, C3HC4 (zinc finger)"/>
    <property type="match status" value="1"/>
</dbReference>
<dbReference type="InterPro" id="IPR015668">
    <property type="entry name" value="Bcl-9/Bcl-9l"/>
</dbReference>
<dbReference type="InterPro" id="IPR024670">
    <property type="entry name" value="BCL9_beta-catenin-bd_dom"/>
</dbReference>
<dbReference type="InterPro" id="IPR013083">
    <property type="entry name" value="Znf_RING/FYVE/PHD"/>
</dbReference>
<dbReference type="PANTHER" id="PTHR15185:SF3">
    <property type="entry name" value="B-CELL CLL_LYMPHOMA 9-LIKE PROTEIN"/>
    <property type="match status" value="1"/>
</dbReference>
<dbReference type="PANTHER" id="PTHR15185">
    <property type="entry name" value="BCL9"/>
    <property type="match status" value="1"/>
</dbReference>
<dbReference type="Pfam" id="PF11502">
    <property type="entry name" value="BCL9"/>
    <property type="match status" value="1"/>
</dbReference>
<evidence type="ECO:0000250" key="1"/>
<evidence type="ECO:0000256" key="2">
    <source>
        <dbReference type="SAM" id="MobiDB-lite"/>
    </source>
</evidence>
<evidence type="ECO:0000269" key="3">
    <source>
    </source>
</evidence>
<evidence type="ECO:0000305" key="4"/>
<proteinExistence type="evidence at transcript level"/>
<accession>Q67FY3</accession>
<gene>
    <name type="primary">bcl9l</name>
</gene>
<organism>
    <name type="scientific">Danio rerio</name>
    <name type="common">Zebrafish</name>
    <name type="synonym">Brachydanio rerio</name>
    <dbReference type="NCBI Taxonomy" id="7955"/>
    <lineage>
        <taxon>Eukaryota</taxon>
        <taxon>Metazoa</taxon>
        <taxon>Chordata</taxon>
        <taxon>Craniata</taxon>
        <taxon>Vertebrata</taxon>
        <taxon>Euteleostomi</taxon>
        <taxon>Actinopterygii</taxon>
        <taxon>Neopterygii</taxon>
        <taxon>Teleostei</taxon>
        <taxon>Ostariophysi</taxon>
        <taxon>Cypriniformes</taxon>
        <taxon>Danionidae</taxon>
        <taxon>Danioninae</taxon>
        <taxon>Danio</taxon>
    </lineage>
</organism>